<gene>
    <name evidence="1" type="primary">rpmI</name>
    <name type="ordered locus">Neut_2329</name>
</gene>
<keyword id="KW-0687">Ribonucleoprotein</keyword>
<keyword id="KW-0689">Ribosomal protein</keyword>
<dbReference type="EMBL" id="CP000450">
    <property type="protein sequence ID" value="ABI60546.1"/>
    <property type="molecule type" value="Genomic_DNA"/>
</dbReference>
<dbReference type="RefSeq" id="WP_011635319.1">
    <property type="nucleotide sequence ID" value="NC_008344.1"/>
</dbReference>
<dbReference type="SMR" id="Q0ADN6"/>
<dbReference type="STRING" id="335283.Neut_2329"/>
<dbReference type="KEGG" id="net:Neut_2329"/>
<dbReference type="eggNOG" id="COG0291">
    <property type="taxonomic scope" value="Bacteria"/>
</dbReference>
<dbReference type="HOGENOM" id="CLU_169643_1_0_4"/>
<dbReference type="OrthoDB" id="47476at2"/>
<dbReference type="Proteomes" id="UP000001966">
    <property type="component" value="Chromosome"/>
</dbReference>
<dbReference type="GO" id="GO:0022625">
    <property type="term" value="C:cytosolic large ribosomal subunit"/>
    <property type="evidence" value="ECO:0007669"/>
    <property type="project" value="TreeGrafter"/>
</dbReference>
<dbReference type="GO" id="GO:0003735">
    <property type="term" value="F:structural constituent of ribosome"/>
    <property type="evidence" value="ECO:0007669"/>
    <property type="project" value="InterPro"/>
</dbReference>
<dbReference type="GO" id="GO:0006412">
    <property type="term" value="P:translation"/>
    <property type="evidence" value="ECO:0007669"/>
    <property type="project" value="UniProtKB-UniRule"/>
</dbReference>
<dbReference type="FunFam" id="4.10.410.60:FF:000001">
    <property type="entry name" value="50S ribosomal protein L35"/>
    <property type="match status" value="1"/>
</dbReference>
<dbReference type="Gene3D" id="4.10.410.60">
    <property type="match status" value="1"/>
</dbReference>
<dbReference type="HAMAP" id="MF_00514">
    <property type="entry name" value="Ribosomal_bL35"/>
    <property type="match status" value="1"/>
</dbReference>
<dbReference type="InterPro" id="IPR001706">
    <property type="entry name" value="Ribosomal_bL35"/>
</dbReference>
<dbReference type="InterPro" id="IPR021137">
    <property type="entry name" value="Ribosomal_bL35-like"/>
</dbReference>
<dbReference type="InterPro" id="IPR018265">
    <property type="entry name" value="Ribosomal_bL35_CS"/>
</dbReference>
<dbReference type="InterPro" id="IPR037229">
    <property type="entry name" value="Ribosomal_bL35_sf"/>
</dbReference>
<dbReference type="NCBIfam" id="TIGR00001">
    <property type="entry name" value="rpmI_bact"/>
    <property type="match status" value="1"/>
</dbReference>
<dbReference type="PANTHER" id="PTHR33343">
    <property type="entry name" value="54S RIBOSOMAL PROTEIN BL35M"/>
    <property type="match status" value="1"/>
</dbReference>
<dbReference type="PANTHER" id="PTHR33343:SF1">
    <property type="entry name" value="LARGE RIBOSOMAL SUBUNIT PROTEIN BL35M"/>
    <property type="match status" value="1"/>
</dbReference>
<dbReference type="Pfam" id="PF01632">
    <property type="entry name" value="Ribosomal_L35p"/>
    <property type="match status" value="1"/>
</dbReference>
<dbReference type="PRINTS" id="PR00064">
    <property type="entry name" value="RIBOSOMALL35"/>
</dbReference>
<dbReference type="SUPFAM" id="SSF143034">
    <property type="entry name" value="L35p-like"/>
    <property type="match status" value="1"/>
</dbReference>
<dbReference type="PROSITE" id="PS00936">
    <property type="entry name" value="RIBOSOMAL_L35"/>
    <property type="match status" value="1"/>
</dbReference>
<proteinExistence type="inferred from homology"/>
<comment type="similarity">
    <text evidence="1">Belongs to the bacterial ribosomal protein bL35 family.</text>
</comment>
<accession>Q0ADN6</accession>
<protein>
    <recommendedName>
        <fullName evidence="1">Large ribosomal subunit protein bL35</fullName>
    </recommendedName>
    <alternativeName>
        <fullName evidence="2">50S ribosomal protein L35</fullName>
    </alternativeName>
</protein>
<evidence type="ECO:0000255" key="1">
    <source>
        <dbReference type="HAMAP-Rule" id="MF_00514"/>
    </source>
</evidence>
<evidence type="ECO:0000305" key="2"/>
<feature type="chain" id="PRO_1000050727" description="Large ribosomal subunit protein bL35">
    <location>
        <begin position="1"/>
        <end position="65"/>
    </location>
</feature>
<name>RL35_NITEC</name>
<reference key="1">
    <citation type="journal article" date="2007" name="Environ. Microbiol.">
        <title>Whole-genome analysis of the ammonia-oxidizing bacterium, Nitrosomonas eutropha C91: implications for niche adaptation.</title>
        <authorList>
            <person name="Stein L.Y."/>
            <person name="Arp D.J."/>
            <person name="Berube P.M."/>
            <person name="Chain P.S."/>
            <person name="Hauser L."/>
            <person name="Jetten M.S."/>
            <person name="Klotz M.G."/>
            <person name="Larimer F.W."/>
            <person name="Norton J.M."/>
            <person name="Op den Camp H.J.M."/>
            <person name="Shin M."/>
            <person name="Wei X."/>
        </authorList>
    </citation>
    <scope>NUCLEOTIDE SEQUENCE [LARGE SCALE GENOMIC DNA]</scope>
    <source>
        <strain>DSM 101675 / C91 / Nm57</strain>
    </source>
</reference>
<sequence>MPKMKTKKSAAKRFRIRAGGSIKRSQAFKRHILTKKTTKNKRQLRGMTVVHASDVASVRAMLPYA</sequence>
<organism>
    <name type="scientific">Nitrosomonas eutropha (strain DSM 101675 / C91 / Nm57)</name>
    <dbReference type="NCBI Taxonomy" id="335283"/>
    <lineage>
        <taxon>Bacteria</taxon>
        <taxon>Pseudomonadati</taxon>
        <taxon>Pseudomonadota</taxon>
        <taxon>Betaproteobacteria</taxon>
        <taxon>Nitrosomonadales</taxon>
        <taxon>Nitrosomonadaceae</taxon>
        <taxon>Nitrosomonas</taxon>
    </lineage>
</organism>